<name>DNAG_SACI1</name>
<sequence>MKYDIKLRFEVEGIVEKTDVIGAIFGQTENLFGDEFDLRELQDKGRLGRIIVEIRTKGGKSEGEIIIPSNLDRIETALIAAMVESVDKVGPYNSKFELIEIEDIRAEKLKKIIERAKGILSSWSKEKSLDIKEVINEISSAVKVGEITEYGPERLPAGPDVDKDPNLIIVEGRADVINLLRYGYKNVIAVEGATSRIPETVVSLSKMKKTVIAFLDGDHGGDLILKELLSNNVKIDFVARAPVGREVEELTGKEIAKALSNMMPLTQYLKKIQEAEQAIAKNVIAKEEKPIQLEATQQLVQITLPQNVLEEIKKLPGTLEGVLYDNNWNLIEKVQVRDIIPKLEAYEDNKVAYIVFDGVITQRLLDLASQKNIKMIIGARIGGINKRPQNVDILTFTDIISS</sequence>
<proteinExistence type="inferred from homology"/>
<keyword id="KW-0235">DNA replication</keyword>
<keyword id="KW-0240">DNA-directed RNA polymerase</keyword>
<keyword id="KW-0271">Exosome</keyword>
<keyword id="KW-0460">Magnesium</keyword>
<keyword id="KW-0479">Metal-binding</keyword>
<keyword id="KW-0548">Nucleotidyltransferase</keyword>
<keyword id="KW-0639">Primosome</keyword>
<keyword id="KW-0804">Transcription</keyword>
<keyword id="KW-0808">Transferase</keyword>
<accession>C3NMQ7</accession>
<dbReference type="EC" id="2.7.7.101" evidence="1"/>
<dbReference type="EMBL" id="CP001404">
    <property type="protein sequence ID" value="ACP47877.1"/>
    <property type="molecule type" value="Genomic_DNA"/>
</dbReference>
<dbReference type="RefSeq" id="WP_012712008.1">
    <property type="nucleotide sequence ID" value="NC_012623.1"/>
</dbReference>
<dbReference type="SMR" id="C3NMQ7"/>
<dbReference type="GeneID" id="84059392"/>
<dbReference type="KEGG" id="sin:YN1551_0752"/>
<dbReference type="HOGENOM" id="CLU_034626_0_0_2"/>
<dbReference type="Proteomes" id="UP000006818">
    <property type="component" value="Chromosome"/>
</dbReference>
<dbReference type="GO" id="GO:0005737">
    <property type="term" value="C:cytoplasm"/>
    <property type="evidence" value="ECO:0007669"/>
    <property type="project" value="TreeGrafter"/>
</dbReference>
<dbReference type="GO" id="GO:0000428">
    <property type="term" value="C:DNA-directed RNA polymerase complex"/>
    <property type="evidence" value="ECO:0007669"/>
    <property type="project" value="UniProtKB-KW"/>
</dbReference>
<dbReference type="GO" id="GO:0000178">
    <property type="term" value="C:exosome (RNase complex)"/>
    <property type="evidence" value="ECO:0007669"/>
    <property type="project" value="UniProtKB-KW"/>
</dbReference>
<dbReference type="GO" id="GO:1990077">
    <property type="term" value="C:primosome complex"/>
    <property type="evidence" value="ECO:0007669"/>
    <property type="project" value="UniProtKB-KW"/>
</dbReference>
<dbReference type="GO" id="GO:0003899">
    <property type="term" value="F:DNA-directed RNA polymerase activity"/>
    <property type="evidence" value="ECO:0007669"/>
    <property type="project" value="InterPro"/>
</dbReference>
<dbReference type="GO" id="GO:0046872">
    <property type="term" value="F:metal ion binding"/>
    <property type="evidence" value="ECO:0007669"/>
    <property type="project" value="UniProtKB-KW"/>
</dbReference>
<dbReference type="GO" id="GO:0008143">
    <property type="term" value="F:poly(A) binding"/>
    <property type="evidence" value="ECO:0007669"/>
    <property type="project" value="InterPro"/>
</dbReference>
<dbReference type="GO" id="GO:0006269">
    <property type="term" value="P:DNA replication, synthesis of primer"/>
    <property type="evidence" value="ECO:0007669"/>
    <property type="project" value="UniProtKB-UniRule"/>
</dbReference>
<dbReference type="CDD" id="cd01029">
    <property type="entry name" value="TOPRIM_primases"/>
    <property type="match status" value="1"/>
</dbReference>
<dbReference type="FunFam" id="3.40.1360.10:FF:000010">
    <property type="entry name" value="DNA primase DnaG"/>
    <property type="match status" value="1"/>
</dbReference>
<dbReference type="Gene3D" id="3.40.1360.10">
    <property type="match status" value="1"/>
</dbReference>
<dbReference type="HAMAP" id="MF_00007">
    <property type="entry name" value="DNA_primase_DnaG_arc"/>
    <property type="match status" value="1"/>
</dbReference>
<dbReference type="InterPro" id="IPR050219">
    <property type="entry name" value="DnaG_primase"/>
</dbReference>
<dbReference type="InterPro" id="IPR020607">
    <property type="entry name" value="Primase_DnaG_arc"/>
</dbReference>
<dbReference type="InterPro" id="IPR034154">
    <property type="entry name" value="TOPRIM_DnaG/twinkle"/>
</dbReference>
<dbReference type="InterPro" id="IPR006171">
    <property type="entry name" value="TOPRIM_dom"/>
</dbReference>
<dbReference type="NCBIfam" id="NF003108">
    <property type="entry name" value="PRK04031.1-1"/>
    <property type="match status" value="1"/>
</dbReference>
<dbReference type="PANTHER" id="PTHR30313">
    <property type="entry name" value="DNA PRIMASE"/>
    <property type="match status" value="1"/>
</dbReference>
<dbReference type="PANTHER" id="PTHR30313:SF2">
    <property type="entry name" value="DNA PRIMASE"/>
    <property type="match status" value="1"/>
</dbReference>
<dbReference type="Pfam" id="PF13662">
    <property type="entry name" value="Toprim_4"/>
    <property type="match status" value="1"/>
</dbReference>
<dbReference type="SMART" id="SM00493">
    <property type="entry name" value="TOPRIM"/>
    <property type="match status" value="1"/>
</dbReference>
<dbReference type="SUPFAM" id="SSF56731">
    <property type="entry name" value="DNA primase core"/>
    <property type="match status" value="1"/>
</dbReference>
<dbReference type="PROSITE" id="PS50880">
    <property type="entry name" value="TOPRIM"/>
    <property type="match status" value="1"/>
</dbReference>
<feature type="chain" id="PRO_1000201712" description="DNA primase DnaG">
    <location>
        <begin position="1"/>
        <end position="402"/>
    </location>
</feature>
<feature type="domain" description="Toprim" evidence="1">
    <location>
        <begin position="165"/>
        <end position="243"/>
    </location>
</feature>
<feature type="binding site" evidence="1">
    <location>
        <position position="171"/>
    </location>
    <ligand>
        <name>Mg(2+)</name>
        <dbReference type="ChEBI" id="CHEBI:18420"/>
        <label>1</label>
        <note>catalytic</note>
    </ligand>
</feature>
<feature type="binding site" evidence="1">
    <location>
        <position position="216"/>
    </location>
    <ligand>
        <name>Mg(2+)</name>
        <dbReference type="ChEBI" id="CHEBI:18420"/>
        <label>1</label>
        <note>catalytic</note>
    </ligand>
</feature>
<feature type="binding site" evidence="1">
    <location>
        <position position="216"/>
    </location>
    <ligand>
        <name>Mg(2+)</name>
        <dbReference type="ChEBI" id="CHEBI:18420"/>
        <label>2</label>
    </ligand>
</feature>
<feature type="binding site" evidence="1">
    <location>
        <position position="218"/>
    </location>
    <ligand>
        <name>Mg(2+)</name>
        <dbReference type="ChEBI" id="CHEBI:18420"/>
        <label>2</label>
    </ligand>
</feature>
<organism>
    <name type="scientific">Saccharolobus islandicus (strain Y.N.15.51 / Yellowstone #2)</name>
    <name type="common">Sulfolobus islandicus</name>
    <dbReference type="NCBI Taxonomy" id="419942"/>
    <lineage>
        <taxon>Archaea</taxon>
        <taxon>Thermoproteota</taxon>
        <taxon>Thermoprotei</taxon>
        <taxon>Sulfolobales</taxon>
        <taxon>Sulfolobaceae</taxon>
        <taxon>Saccharolobus</taxon>
    </lineage>
</organism>
<comment type="function">
    <text evidence="1">RNA polymerase that catalyzes the synthesis of short RNA molecules used as primers for DNA polymerase during DNA replication. Also part of the exosome, which is a complex involved in RNA degradation. Acts as a poly(A)-binding protein that enhances the interaction between heteromeric, adenine-rich transcripts and the exosome.</text>
</comment>
<comment type="catalytic activity">
    <reaction evidence="1">
        <text>ssDNA + n NTP = ssDNA/pppN(pN)n-1 hybrid + (n-1) diphosphate.</text>
        <dbReference type="EC" id="2.7.7.101"/>
    </reaction>
</comment>
<comment type="cofactor">
    <cofactor evidence="1">
        <name>Mg(2+)</name>
        <dbReference type="ChEBI" id="CHEBI:18420"/>
    </cofactor>
    <text evidence="1">Binds two Mg(2+) per subunit.</text>
</comment>
<comment type="subunit">
    <text evidence="1">Forms a ternary complex with MCM helicase and DNA. Component of the archaeal exosome complex.</text>
</comment>
<comment type="similarity">
    <text evidence="1">Belongs to the archaeal DnaG primase family.</text>
</comment>
<protein>
    <recommendedName>
        <fullName evidence="1">DNA primase DnaG</fullName>
        <ecNumber evidence="1">2.7.7.101</ecNumber>
    </recommendedName>
</protein>
<reference key="1">
    <citation type="journal article" date="2009" name="Proc. Natl. Acad. Sci. U.S.A.">
        <title>Biogeography of the Sulfolobus islandicus pan-genome.</title>
        <authorList>
            <person name="Reno M.L."/>
            <person name="Held N.L."/>
            <person name="Fields C.J."/>
            <person name="Burke P.V."/>
            <person name="Whitaker R.J."/>
        </authorList>
    </citation>
    <scope>NUCLEOTIDE SEQUENCE [LARGE SCALE GENOMIC DNA]</scope>
    <source>
        <strain>Y.N.15.51 / Yellowstone #2</strain>
    </source>
</reference>
<gene>
    <name evidence="1" type="primary">dnaG</name>
    <name type="ordered locus">YN1551_0752</name>
</gene>
<evidence type="ECO:0000255" key="1">
    <source>
        <dbReference type="HAMAP-Rule" id="MF_00007"/>
    </source>
</evidence>